<feature type="chain" id="PRO_0000286386" description="Protein FAM124B">
    <location>
        <begin position="1"/>
        <end position="426"/>
    </location>
</feature>
<organism>
    <name type="scientific">Xenopus tropicalis</name>
    <name type="common">Western clawed frog</name>
    <name type="synonym">Silurana tropicalis</name>
    <dbReference type="NCBI Taxonomy" id="8364"/>
    <lineage>
        <taxon>Eukaryota</taxon>
        <taxon>Metazoa</taxon>
        <taxon>Chordata</taxon>
        <taxon>Craniata</taxon>
        <taxon>Vertebrata</taxon>
        <taxon>Euteleostomi</taxon>
        <taxon>Amphibia</taxon>
        <taxon>Batrachia</taxon>
        <taxon>Anura</taxon>
        <taxon>Pipoidea</taxon>
        <taxon>Pipidae</taxon>
        <taxon>Xenopodinae</taxon>
        <taxon>Xenopus</taxon>
        <taxon>Silurana</taxon>
    </lineage>
</organism>
<dbReference type="EMBL" id="BC081309">
    <property type="protein sequence ID" value="AAH81309.1"/>
    <property type="molecule type" value="mRNA"/>
</dbReference>
<dbReference type="RefSeq" id="NP_001008107.1">
    <property type="nucleotide sequence ID" value="NM_001008106.1"/>
</dbReference>
<dbReference type="RefSeq" id="XP_012825791.1">
    <property type="nucleotide sequence ID" value="XM_012970337.3"/>
</dbReference>
<dbReference type="RefSeq" id="XP_012825793.1">
    <property type="nucleotide sequence ID" value="XM_012970339.3"/>
</dbReference>
<dbReference type="RefSeq" id="XP_012825794.1">
    <property type="nucleotide sequence ID" value="XM_012970340.3"/>
</dbReference>
<dbReference type="RefSeq" id="XP_012825795.1">
    <property type="nucleotide sequence ID" value="XM_012970341.3"/>
</dbReference>
<dbReference type="RefSeq" id="XP_012825797.1">
    <property type="nucleotide sequence ID" value="XM_012970343.3"/>
</dbReference>
<dbReference type="RefSeq" id="XP_017949349.1">
    <property type="nucleotide sequence ID" value="XM_018093860.2"/>
</dbReference>
<dbReference type="FunCoup" id="Q66IK8">
    <property type="interactions" value="1002"/>
</dbReference>
<dbReference type="STRING" id="8364.ENSXETP00000020133"/>
<dbReference type="PaxDb" id="8364-ENSXETP00000058262"/>
<dbReference type="DNASU" id="493469"/>
<dbReference type="GeneID" id="493469"/>
<dbReference type="KEGG" id="xtr:493469"/>
<dbReference type="AGR" id="Xenbase:XB-GENE-1009185"/>
<dbReference type="CTD" id="79843"/>
<dbReference type="Xenbase" id="XB-GENE-1009185">
    <property type="gene designation" value="fam124b"/>
</dbReference>
<dbReference type="eggNOG" id="ENOG502QUJG">
    <property type="taxonomic scope" value="Eukaryota"/>
</dbReference>
<dbReference type="HOGENOM" id="CLU_037215_0_0_1"/>
<dbReference type="InParanoid" id="Q66IK8"/>
<dbReference type="OMA" id="YMCELLE"/>
<dbReference type="OrthoDB" id="10023686at2759"/>
<dbReference type="PhylomeDB" id="Q66IK8"/>
<dbReference type="TreeFam" id="TF328699"/>
<dbReference type="Proteomes" id="UP000008143">
    <property type="component" value="Chromosome 5"/>
</dbReference>
<dbReference type="Bgee" id="ENSXETG00000028080">
    <property type="expression patterns" value="Expressed in egg cell and 8 other cell types or tissues"/>
</dbReference>
<dbReference type="ExpressionAtlas" id="Q66IK8">
    <property type="expression patterns" value="baseline"/>
</dbReference>
<dbReference type="GO" id="GO:0005634">
    <property type="term" value="C:nucleus"/>
    <property type="evidence" value="ECO:0007669"/>
    <property type="project" value="UniProtKB-SubCell"/>
</dbReference>
<dbReference type="InterPro" id="IPR029380">
    <property type="entry name" value="FAM124"/>
</dbReference>
<dbReference type="InterPro" id="IPR046365">
    <property type="entry name" value="FAM124_dom"/>
</dbReference>
<dbReference type="PANTHER" id="PTHR14715">
    <property type="entry name" value="FAM124 DOMAIN-CONTAINING PROTEIN-RELATED"/>
    <property type="match status" value="1"/>
</dbReference>
<dbReference type="PANTHER" id="PTHR14715:SF2">
    <property type="entry name" value="PROTEIN FAM124B"/>
    <property type="match status" value="1"/>
</dbReference>
<dbReference type="Pfam" id="PF15067">
    <property type="entry name" value="FAM124"/>
    <property type="match status" value="1"/>
</dbReference>
<evidence type="ECO:0000250" key="1">
    <source>
        <dbReference type="UniProtKB" id="Q9H5Z6"/>
    </source>
</evidence>
<evidence type="ECO:0000305" key="2"/>
<reference key="1">
    <citation type="submission" date="2004-08" db="EMBL/GenBank/DDBJ databases">
        <authorList>
            <consortium name="NIH - Xenopus Gene Collection (XGC) project"/>
        </authorList>
    </citation>
    <scope>NUCLEOTIDE SEQUENCE [LARGE SCALE MRNA]</scope>
    <source>
        <tissue>Gastrula</tissue>
    </source>
</reference>
<keyword id="KW-0539">Nucleus</keyword>
<keyword id="KW-1185">Reference proteome</keyword>
<proteinExistence type="evidence at transcript level"/>
<sequence>MDERQTVLPLTVHLLASSGDSLAFQLAVDRLLHRICPDVRLFLVSERAAPIKLYECQTKRPEFPGISVTLFLREDLGEERIDLLQSFFQLPPWTHVIADFQQGRSCPFKLPLCDYYSLDSHMPVWEMRHVHYGTEIVRLTVYCSCDNYEDAVRLYETILQKEATTQKAGFCFFVLYSTTHVSVQLSIKQLHPGISVQVKDACALQFAIHAVGQLVPLLPYPCVPISDARWQTQDYDGNKILLLVVDHTTATQRKAESKAASTLMVIPDNPSLPFTSLNRSMEAKVQNAKDTINPKNISVSSNYLDQSETIYNNTNPSQKLLAPHGIQMKETESNVDTGYTVVSLTSQQAYICELSENQQSAPAFEDIYFSTSQRKSPQNLPFKLEESSSSDVVEGSKALGMTGSMFHSERYQIHNSNISEEEEFFI</sequence>
<protein>
    <recommendedName>
        <fullName>Protein FAM124B</fullName>
    </recommendedName>
</protein>
<accession>Q66IK8</accession>
<comment type="subcellular location">
    <subcellularLocation>
        <location evidence="1">Nucleus</location>
    </subcellularLocation>
</comment>
<comment type="similarity">
    <text evidence="2">Belongs to the FAM124 family.</text>
</comment>
<gene>
    <name type="primary">fam124b</name>
</gene>
<name>F124B_XENTR</name>